<keyword id="KW-0249">Electron transport</keyword>
<keyword id="KW-0472">Membrane</keyword>
<keyword id="KW-0496">Mitochondrion</keyword>
<keyword id="KW-0999">Mitochondrion inner membrane</keyword>
<keyword id="KW-0520">NAD</keyword>
<keyword id="KW-0679">Respiratory chain</keyword>
<keyword id="KW-1278">Translocase</keyword>
<keyword id="KW-0812">Transmembrane</keyword>
<keyword id="KW-1133">Transmembrane helix</keyword>
<keyword id="KW-0813">Transport</keyword>
<keyword id="KW-0830">Ubiquinone</keyword>
<name>NU1M_POLOR</name>
<gene>
    <name type="primary">MT-ND1</name>
    <name type="synonym">MTND1</name>
    <name type="synonym">NADH1</name>
    <name type="synonym">ND1</name>
</gene>
<geneLocation type="mitochondrion"/>
<organism>
    <name type="scientific">Polypterus ornatipinnis</name>
    <name type="common">Ornate bichir</name>
    <dbReference type="NCBI Taxonomy" id="49895"/>
    <lineage>
        <taxon>Eukaryota</taxon>
        <taxon>Metazoa</taxon>
        <taxon>Chordata</taxon>
        <taxon>Craniata</taxon>
        <taxon>Vertebrata</taxon>
        <taxon>Euteleostomi</taxon>
        <taxon>Actinopterygii</taxon>
        <taxon>Polypteriformes</taxon>
        <taxon>Polypteridae</taxon>
        <taxon>Polypterus</taxon>
    </lineage>
</organism>
<evidence type="ECO:0000250" key="1"/>
<evidence type="ECO:0000255" key="2"/>
<evidence type="ECO:0000305" key="3"/>
<comment type="function">
    <text evidence="1">Core subunit of the mitochondrial membrane respiratory chain NADH dehydrogenase (Complex I) that is believed to belong to the minimal assembly required for catalysis. Complex I functions in the transfer of electrons from NADH to the respiratory chain. The immediate electron acceptor for the enzyme is believed to be ubiquinone (By similarity).</text>
</comment>
<comment type="catalytic activity">
    <reaction>
        <text>a ubiquinone + NADH + 5 H(+)(in) = a ubiquinol + NAD(+) + 4 H(+)(out)</text>
        <dbReference type="Rhea" id="RHEA:29091"/>
        <dbReference type="Rhea" id="RHEA-COMP:9565"/>
        <dbReference type="Rhea" id="RHEA-COMP:9566"/>
        <dbReference type="ChEBI" id="CHEBI:15378"/>
        <dbReference type="ChEBI" id="CHEBI:16389"/>
        <dbReference type="ChEBI" id="CHEBI:17976"/>
        <dbReference type="ChEBI" id="CHEBI:57540"/>
        <dbReference type="ChEBI" id="CHEBI:57945"/>
        <dbReference type="EC" id="7.1.1.2"/>
    </reaction>
</comment>
<comment type="subcellular location">
    <subcellularLocation>
        <location evidence="1">Mitochondrion inner membrane</location>
        <topology evidence="1">Multi-pass membrane protein</topology>
    </subcellularLocation>
</comment>
<comment type="similarity">
    <text evidence="3">Belongs to the complex I subunit 1 family.</text>
</comment>
<dbReference type="EC" id="7.1.1.2"/>
<dbReference type="EMBL" id="U62532">
    <property type="protein sequence ID" value="AAC60305.1"/>
    <property type="molecule type" value="Genomic_DNA"/>
</dbReference>
<dbReference type="PIR" id="T11454">
    <property type="entry name" value="T11454"/>
</dbReference>
<dbReference type="RefSeq" id="NP_008316.1">
    <property type="nucleotide sequence ID" value="NC_001778.1"/>
</dbReference>
<dbReference type="SMR" id="Q96182"/>
<dbReference type="GeneID" id="808035"/>
<dbReference type="CTD" id="4535"/>
<dbReference type="GO" id="GO:0005743">
    <property type="term" value="C:mitochondrial inner membrane"/>
    <property type="evidence" value="ECO:0007669"/>
    <property type="project" value="UniProtKB-SubCell"/>
</dbReference>
<dbReference type="GO" id="GO:0008137">
    <property type="term" value="F:NADH dehydrogenase (ubiquinone) activity"/>
    <property type="evidence" value="ECO:0007669"/>
    <property type="project" value="UniProtKB-EC"/>
</dbReference>
<dbReference type="GO" id="GO:0009060">
    <property type="term" value="P:aerobic respiration"/>
    <property type="evidence" value="ECO:0007669"/>
    <property type="project" value="TreeGrafter"/>
</dbReference>
<dbReference type="HAMAP" id="MF_01350">
    <property type="entry name" value="NDH1_NuoH"/>
    <property type="match status" value="1"/>
</dbReference>
<dbReference type="InterPro" id="IPR001694">
    <property type="entry name" value="NADH_UbQ_OxRdtase_su1/FPO"/>
</dbReference>
<dbReference type="InterPro" id="IPR018086">
    <property type="entry name" value="NADH_UbQ_OxRdtase_su1_CS"/>
</dbReference>
<dbReference type="PANTHER" id="PTHR11432">
    <property type="entry name" value="NADH DEHYDROGENASE SUBUNIT 1"/>
    <property type="match status" value="1"/>
</dbReference>
<dbReference type="PANTHER" id="PTHR11432:SF3">
    <property type="entry name" value="NADH-UBIQUINONE OXIDOREDUCTASE CHAIN 1"/>
    <property type="match status" value="1"/>
</dbReference>
<dbReference type="Pfam" id="PF00146">
    <property type="entry name" value="NADHdh"/>
    <property type="match status" value="1"/>
</dbReference>
<dbReference type="PROSITE" id="PS00667">
    <property type="entry name" value="COMPLEX1_ND1_1"/>
    <property type="match status" value="1"/>
</dbReference>
<dbReference type="PROSITE" id="PS00668">
    <property type="entry name" value="COMPLEX1_ND1_2"/>
    <property type="match status" value="1"/>
</dbReference>
<reference key="1">
    <citation type="journal article" date="1996" name="Genetics">
        <title>The complete mitochondrial DNA sequence of the bichir (Polypterus ornatipinnis), a basal ray-finned fish: ancient establishment of the consensus vertebrate gene order.</title>
        <authorList>
            <person name="Noack K."/>
            <person name="Zardoya R."/>
            <person name="Meyer A."/>
        </authorList>
    </citation>
    <scope>NUCLEOTIDE SEQUENCE [GENOMIC DNA]</scope>
</reference>
<protein>
    <recommendedName>
        <fullName>NADH-ubiquinone oxidoreductase chain 1</fullName>
        <ecNumber>7.1.1.2</ecNumber>
    </recommendedName>
    <alternativeName>
        <fullName>NADH dehydrogenase subunit 1</fullName>
    </alternativeName>
</protein>
<proteinExistence type="inferred from homology"/>
<accession>Q96182</accession>
<feature type="chain" id="PRO_0000117460" description="NADH-ubiquinone oxidoreductase chain 1">
    <location>
        <begin position="1"/>
        <end position="319"/>
    </location>
</feature>
<feature type="transmembrane region" description="Helical" evidence="2">
    <location>
        <begin position="3"/>
        <end position="23"/>
    </location>
</feature>
<feature type="transmembrane region" description="Helical" evidence="2">
    <location>
        <begin position="74"/>
        <end position="94"/>
    </location>
</feature>
<feature type="transmembrane region" description="Helical" evidence="2">
    <location>
        <begin position="106"/>
        <end position="126"/>
    </location>
</feature>
<feature type="transmembrane region" description="Helical" evidence="2">
    <location>
        <begin position="149"/>
        <end position="169"/>
    </location>
</feature>
<feature type="transmembrane region" description="Helical" evidence="2">
    <location>
        <begin position="175"/>
        <end position="195"/>
    </location>
</feature>
<feature type="transmembrane region" description="Helical" evidence="2">
    <location>
        <begin position="226"/>
        <end position="246"/>
    </location>
</feature>
<feature type="transmembrane region" description="Helical" evidence="2">
    <location>
        <begin position="254"/>
        <end position="274"/>
    </location>
</feature>
<feature type="transmembrane region" description="Helical" evidence="2">
    <location>
        <begin position="294"/>
        <end position="314"/>
    </location>
</feature>
<sequence>MTLITLIINPLMYIIPILLAMAFLTLVERKMLGYMQLRKGPNIVGPYGLLQPIADGVKLFIKEPVKPSTSSPTLFLLTPTLALTLALILWIPLPMPLALTDLNLTILFILAVSSLSVYSILGSGWASNSKYALIGALRAVAQTISYEVTLGLIIISLIMFTGGFTLTTFNTAQEAVWLILPAWPLAAMWFISTLAETNRAPFDLTEGESELVSGFNVEYAGGPFALFFLAEYTNILLMNALSTILFLGPSFNTLTINLNWAIKTMILASMFLWVRASYPRFRYDQLMHLVWKNFLPLTLALITWHISLPISMAGSPPQL</sequence>